<keyword id="KW-0963">Cytoplasm</keyword>
<keyword id="KW-0255">Endonuclease</keyword>
<keyword id="KW-0378">Hydrolase</keyword>
<keyword id="KW-0460">Magnesium</keyword>
<keyword id="KW-0479">Metal-binding</keyword>
<keyword id="KW-0540">Nuclease</keyword>
<sequence length="313" mass="33899">MSHSVIKVSASAMEQMKQSYAGSLTPAVPQGAVFQAKPPGCTITAYRSGKVLFQGKNAGTEAARWGTAEAPKAKKTVKKAADPLYAPPAGIASMSVIGSDEVGTGDYFGPITVACAYADKTKLSLMKELGVKDSKDLKDPQIIEIAKLLIKTIPYSLLVLKNEKYNQMQEKGMSQGKMKALLHNQAISNLLRKMNGVKPEAILIDQFAEPGIYFKHLSGRDIVKEKTFFSTKAESIHLSVAAASIIARYSFLIEMDKLSREAGMTIPKGAGPHVDEAAAKLIINKGEGALRTFTKLHFANTQKAKRLVERKRS</sequence>
<organism>
    <name type="scientific">Bacillus velezensis (strain DSM 23117 / BGSC 10A6 / LMG 26770 / FZB42)</name>
    <name type="common">Bacillus amyloliquefaciens subsp. plantarum</name>
    <dbReference type="NCBI Taxonomy" id="326423"/>
    <lineage>
        <taxon>Bacteria</taxon>
        <taxon>Bacillati</taxon>
        <taxon>Bacillota</taxon>
        <taxon>Bacilli</taxon>
        <taxon>Bacillales</taxon>
        <taxon>Bacillaceae</taxon>
        <taxon>Bacillus</taxon>
        <taxon>Bacillus amyloliquefaciens group</taxon>
    </lineage>
</organism>
<proteinExistence type="inferred from homology"/>
<reference key="1">
    <citation type="journal article" date="2007" name="Nat. Biotechnol.">
        <title>Comparative analysis of the complete genome sequence of the plant growth-promoting bacterium Bacillus amyloliquefaciens FZB42.</title>
        <authorList>
            <person name="Chen X.H."/>
            <person name="Koumoutsi A."/>
            <person name="Scholz R."/>
            <person name="Eisenreich A."/>
            <person name="Schneider K."/>
            <person name="Heinemeyer I."/>
            <person name="Morgenstern B."/>
            <person name="Voss B."/>
            <person name="Hess W.R."/>
            <person name="Reva O."/>
            <person name="Junge H."/>
            <person name="Voigt B."/>
            <person name="Jungblut P.R."/>
            <person name="Vater J."/>
            <person name="Suessmuth R."/>
            <person name="Liesegang H."/>
            <person name="Strittmatter A."/>
            <person name="Gottschalk G."/>
            <person name="Borriss R."/>
        </authorList>
    </citation>
    <scope>NUCLEOTIDE SEQUENCE [LARGE SCALE GENOMIC DNA]</scope>
    <source>
        <strain>DSM 23117 / BGSC 10A6 / LMG 26770 / FZB42</strain>
    </source>
</reference>
<evidence type="ECO:0000255" key="1">
    <source>
        <dbReference type="HAMAP-Rule" id="MF_00053"/>
    </source>
</evidence>
<evidence type="ECO:0000255" key="2">
    <source>
        <dbReference type="PROSITE-ProRule" id="PRU01319"/>
    </source>
</evidence>
<accession>A7Z7F1</accession>
<gene>
    <name evidence="1" type="primary">rnhC</name>
    <name type="ordered locus">RBAM_025690</name>
</gene>
<comment type="function">
    <text evidence="1">Endonuclease that specifically degrades the RNA of RNA-DNA hybrids.</text>
</comment>
<comment type="catalytic activity">
    <reaction evidence="1">
        <text>Endonucleolytic cleavage to 5'-phosphomonoester.</text>
        <dbReference type="EC" id="3.1.26.4"/>
    </reaction>
</comment>
<comment type="cofactor">
    <cofactor evidence="1">
        <name>Mn(2+)</name>
        <dbReference type="ChEBI" id="CHEBI:29035"/>
    </cofactor>
    <cofactor evidence="1">
        <name>Mg(2+)</name>
        <dbReference type="ChEBI" id="CHEBI:18420"/>
    </cofactor>
    <text evidence="1">Manganese or magnesium. Binds 1 divalent metal ion per monomer in the absence of substrate. May bind a second metal ion after substrate binding.</text>
</comment>
<comment type="subcellular location">
    <subcellularLocation>
        <location evidence="1">Cytoplasm</location>
    </subcellularLocation>
</comment>
<comment type="similarity">
    <text evidence="1">Belongs to the RNase HII family. RnhC subfamily.</text>
</comment>
<feature type="chain" id="PRO_1000031225" description="Ribonuclease HIII">
    <location>
        <begin position="1"/>
        <end position="313"/>
    </location>
</feature>
<feature type="domain" description="RNase H type-2" evidence="2">
    <location>
        <begin position="94"/>
        <end position="310"/>
    </location>
</feature>
<feature type="binding site" evidence="1">
    <location>
        <position position="100"/>
    </location>
    <ligand>
        <name>a divalent metal cation</name>
        <dbReference type="ChEBI" id="CHEBI:60240"/>
    </ligand>
</feature>
<feature type="binding site" evidence="1">
    <location>
        <position position="101"/>
    </location>
    <ligand>
        <name>a divalent metal cation</name>
        <dbReference type="ChEBI" id="CHEBI:60240"/>
    </ligand>
</feature>
<feature type="binding site" evidence="1">
    <location>
        <position position="205"/>
    </location>
    <ligand>
        <name>a divalent metal cation</name>
        <dbReference type="ChEBI" id="CHEBI:60240"/>
    </ligand>
</feature>
<protein>
    <recommendedName>
        <fullName evidence="1">Ribonuclease HIII</fullName>
        <shortName evidence="1">RNase HIII</shortName>
        <ecNumber evidence="1">3.1.26.4</ecNumber>
    </recommendedName>
</protein>
<dbReference type="EC" id="3.1.26.4" evidence="1"/>
<dbReference type="EMBL" id="CP000560">
    <property type="protein sequence ID" value="ABS74927.1"/>
    <property type="molecule type" value="Genomic_DNA"/>
</dbReference>
<dbReference type="RefSeq" id="WP_012118136.1">
    <property type="nucleotide sequence ID" value="NC_009725.2"/>
</dbReference>
<dbReference type="SMR" id="A7Z7F1"/>
<dbReference type="GeneID" id="93081711"/>
<dbReference type="KEGG" id="bay:RBAM_025690"/>
<dbReference type="HOGENOM" id="CLU_059546_1_0_9"/>
<dbReference type="Proteomes" id="UP000001120">
    <property type="component" value="Chromosome"/>
</dbReference>
<dbReference type="GO" id="GO:0005737">
    <property type="term" value="C:cytoplasm"/>
    <property type="evidence" value="ECO:0007669"/>
    <property type="project" value="UniProtKB-SubCell"/>
</dbReference>
<dbReference type="GO" id="GO:0032299">
    <property type="term" value="C:ribonuclease H2 complex"/>
    <property type="evidence" value="ECO:0007669"/>
    <property type="project" value="TreeGrafter"/>
</dbReference>
<dbReference type="GO" id="GO:0000287">
    <property type="term" value="F:magnesium ion binding"/>
    <property type="evidence" value="ECO:0007669"/>
    <property type="project" value="UniProtKB-UniRule"/>
</dbReference>
<dbReference type="GO" id="GO:0003723">
    <property type="term" value="F:RNA binding"/>
    <property type="evidence" value="ECO:0007669"/>
    <property type="project" value="InterPro"/>
</dbReference>
<dbReference type="GO" id="GO:0004523">
    <property type="term" value="F:RNA-DNA hybrid ribonuclease activity"/>
    <property type="evidence" value="ECO:0007669"/>
    <property type="project" value="UniProtKB-UniRule"/>
</dbReference>
<dbReference type="GO" id="GO:0043137">
    <property type="term" value="P:DNA replication, removal of RNA primer"/>
    <property type="evidence" value="ECO:0007669"/>
    <property type="project" value="TreeGrafter"/>
</dbReference>
<dbReference type="GO" id="GO:0006298">
    <property type="term" value="P:mismatch repair"/>
    <property type="evidence" value="ECO:0007669"/>
    <property type="project" value="TreeGrafter"/>
</dbReference>
<dbReference type="CDD" id="cd06590">
    <property type="entry name" value="RNase_HII_bacteria_HIII_like"/>
    <property type="match status" value="1"/>
</dbReference>
<dbReference type="CDD" id="cd14796">
    <property type="entry name" value="RNAse_HIII_N"/>
    <property type="match status" value="1"/>
</dbReference>
<dbReference type="FunFam" id="3.30.420.10:FF:000047">
    <property type="entry name" value="Ribonuclease HIII"/>
    <property type="match status" value="1"/>
</dbReference>
<dbReference type="Gene3D" id="3.30.420.10">
    <property type="entry name" value="Ribonuclease H-like superfamily/Ribonuclease H"/>
    <property type="match status" value="1"/>
</dbReference>
<dbReference type="Gene3D" id="3.30.310.10">
    <property type="entry name" value="TATA-Binding Protein"/>
    <property type="match status" value="1"/>
</dbReference>
<dbReference type="HAMAP" id="MF_00053">
    <property type="entry name" value="RNase_HIII"/>
    <property type="match status" value="1"/>
</dbReference>
<dbReference type="InterPro" id="IPR001352">
    <property type="entry name" value="RNase_HII/HIII"/>
</dbReference>
<dbReference type="InterPro" id="IPR024567">
    <property type="entry name" value="RNase_HII/HIII_dom"/>
</dbReference>
<dbReference type="InterPro" id="IPR004641">
    <property type="entry name" value="RNase_HIII"/>
</dbReference>
<dbReference type="InterPro" id="IPR024568">
    <property type="entry name" value="RNase_HIII_N"/>
</dbReference>
<dbReference type="InterPro" id="IPR012337">
    <property type="entry name" value="RNaseH-like_sf"/>
</dbReference>
<dbReference type="InterPro" id="IPR036397">
    <property type="entry name" value="RNaseH_sf"/>
</dbReference>
<dbReference type="InterPro" id="IPR012295">
    <property type="entry name" value="TBP_dom_sf"/>
</dbReference>
<dbReference type="NCBIfam" id="TIGR00716">
    <property type="entry name" value="rnhC"/>
    <property type="match status" value="1"/>
</dbReference>
<dbReference type="PANTHER" id="PTHR10954:SF23">
    <property type="entry name" value="RIBONUCLEASE"/>
    <property type="match status" value="1"/>
</dbReference>
<dbReference type="PANTHER" id="PTHR10954">
    <property type="entry name" value="RIBONUCLEASE H2 SUBUNIT A"/>
    <property type="match status" value="1"/>
</dbReference>
<dbReference type="Pfam" id="PF11858">
    <property type="entry name" value="DUF3378"/>
    <property type="match status" value="1"/>
</dbReference>
<dbReference type="Pfam" id="PF01351">
    <property type="entry name" value="RNase_HII"/>
    <property type="match status" value="1"/>
</dbReference>
<dbReference type="PIRSF" id="PIRSF037748">
    <property type="entry name" value="RnhC"/>
    <property type="match status" value="1"/>
</dbReference>
<dbReference type="SUPFAM" id="SSF53098">
    <property type="entry name" value="Ribonuclease H-like"/>
    <property type="match status" value="1"/>
</dbReference>
<dbReference type="PROSITE" id="PS51975">
    <property type="entry name" value="RNASE_H_2"/>
    <property type="match status" value="1"/>
</dbReference>
<name>RNH3_BACVZ</name>